<proteinExistence type="inferred from homology"/>
<accession>B4TT59</accession>
<name>DARP_SALSV</name>
<sequence length="183" mass="21392">MTKQPEDWLDDVPGDDIEDEDDEIIWVSKSEIKRDAEELKRLGAELVDLGKNALDKIPLDADLRDAIELAQRIKMEGRRRQLQLIGKMLRQRDVEPIRQALDKLKNRHNQQVVLFHKLEHLRDRLIVEGDDAVAEVLTLWPHADRQQLRSLIRNAKKEKEGNKPPKSARQIFQYLRELAENEG</sequence>
<keyword id="KW-0963">Cytoplasm</keyword>
<keyword id="KW-0690">Ribosome biogenesis</keyword>
<keyword id="KW-0694">RNA-binding</keyword>
<keyword id="KW-0699">rRNA-binding</keyword>
<protein>
    <recommendedName>
        <fullName evidence="1">Dual-action ribosomal maturation protein DarP</fullName>
    </recommendedName>
    <alternativeName>
        <fullName evidence="1">Large ribosomal subunit assembly factor DarP</fullName>
    </alternativeName>
</protein>
<reference key="1">
    <citation type="journal article" date="2011" name="J. Bacteriol.">
        <title>Comparative genomics of 28 Salmonella enterica isolates: evidence for CRISPR-mediated adaptive sublineage evolution.</title>
        <authorList>
            <person name="Fricke W.F."/>
            <person name="Mammel M.K."/>
            <person name="McDermott P.F."/>
            <person name="Tartera C."/>
            <person name="White D.G."/>
            <person name="Leclerc J.E."/>
            <person name="Ravel J."/>
            <person name="Cebula T.A."/>
        </authorList>
    </citation>
    <scope>NUCLEOTIDE SEQUENCE [LARGE SCALE GENOMIC DNA]</scope>
    <source>
        <strain>CVM19633</strain>
    </source>
</reference>
<organism>
    <name type="scientific">Salmonella schwarzengrund (strain CVM19633)</name>
    <dbReference type="NCBI Taxonomy" id="439843"/>
    <lineage>
        <taxon>Bacteria</taxon>
        <taxon>Pseudomonadati</taxon>
        <taxon>Pseudomonadota</taxon>
        <taxon>Gammaproteobacteria</taxon>
        <taxon>Enterobacterales</taxon>
        <taxon>Enterobacteriaceae</taxon>
        <taxon>Salmonella</taxon>
    </lineage>
</organism>
<feature type="chain" id="PRO_1000198399" description="Dual-action ribosomal maturation protein DarP">
    <location>
        <begin position="1"/>
        <end position="183"/>
    </location>
</feature>
<gene>
    <name evidence="1" type="primary">darP</name>
    <name type="ordered locus">SeSA_A4687</name>
</gene>
<comment type="function">
    <text evidence="1">Member of a network of 50S ribosomal subunit biogenesis factors which assembles along the 30S-50S interface, preventing incorrect 23S rRNA structures from forming. Promotes peptidyl transferase center (PTC) maturation.</text>
</comment>
<comment type="subcellular location">
    <subcellularLocation>
        <location evidence="1">Cytoplasm</location>
    </subcellularLocation>
    <text evidence="1">Associates with late stage pre-50S ribosomal subunits.</text>
</comment>
<comment type="similarity">
    <text evidence="1">Belongs to the DarP family.</text>
</comment>
<evidence type="ECO:0000255" key="1">
    <source>
        <dbReference type="HAMAP-Rule" id="MF_00765"/>
    </source>
</evidence>
<dbReference type="EMBL" id="CP001127">
    <property type="protein sequence ID" value="ACF92834.1"/>
    <property type="molecule type" value="Genomic_DNA"/>
</dbReference>
<dbReference type="SMR" id="B4TT59"/>
<dbReference type="KEGG" id="sew:SeSA_A4687"/>
<dbReference type="HOGENOM" id="CLU_106757_2_0_6"/>
<dbReference type="Proteomes" id="UP000001865">
    <property type="component" value="Chromosome"/>
</dbReference>
<dbReference type="GO" id="GO:0005829">
    <property type="term" value="C:cytosol"/>
    <property type="evidence" value="ECO:0007669"/>
    <property type="project" value="TreeGrafter"/>
</dbReference>
<dbReference type="GO" id="GO:0043022">
    <property type="term" value="F:ribosome binding"/>
    <property type="evidence" value="ECO:0007669"/>
    <property type="project" value="UniProtKB-UniRule"/>
</dbReference>
<dbReference type="GO" id="GO:0019843">
    <property type="term" value="F:rRNA binding"/>
    <property type="evidence" value="ECO:0007669"/>
    <property type="project" value="UniProtKB-UniRule"/>
</dbReference>
<dbReference type="GO" id="GO:1902626">
    <property type="term" value="P:assembly of large subunit precursor of preribosome"/>
    <property type="evidence" value="ECO:0007669"/>
    <property type="project" value="UniProtKB-UniRule"/>
</dbReference>
<dbReference type="CDD" id="cd16331">
    <property type="entry name" value="YjgA-like"/>
    <property type="match status" value="1"/>
</dbReference>
<dbReference type="FunFam" id="1.10.60.30:FF:000001">
    <property type="entry name" value="UPF0307 protein YjgA"/>
    <property type="match status" value="1"/>
</dbReference>
<dbReference type="FunFam" id="1.10.60.30:FF:000002">
    <property type="entry name" value="UPF0307 protein YjgA"/>
    <property type="match status" value="1"/>
</dbReference>
<dbReference type="Gene3D" id="1.10.60.30">
    <property type="entry name" value="PSPTO4464-like domains"/>
    <property type="match status" value="2"/>
</dbReference>
<dbReference type="HAMAP" id="MF_00765">
    <property type="entry name" value="DarP"/>
    <property type="match status" value="1"/>
</dbReference>
<dbReference type="InterPro" id="IPR006839">
    <property type="entry name" value="DarP"/>
</dbReference>
<dbReference type="InterPro" id="IPR023153">
    <property type="entry name" value="DarP_sf"/>
</dbReference>
<dbReference type="NCBIfam" id="NF003593">
    <property type="entry name" value="PRK05255.1-1"/>
    <property type="match status" value="1"/>
</dbReference>
<dbReference type="PANTHER" id="PTHR38101">
    <property type="entry name" value="UPF0307 PROTEIN YJGA"/>
    <property type="match status" value="1"/>
</dbReference>
<dbReference type="PANTHER" id="PTHR38101:SF1">
    <property type="entry name" value="UPF0307 PROTEIN YJGA"/>
    <property type="match status" value="1"/>
</dbReference>
<dbReference type="Pfam" id="PF04751">
    <property type="entry name" value="DarP"/>
    <property type="match status" value="1"/>
</dbReference>
<dbReference type="PIRSF" id="PIRSF016183">
    <property type="entry name" value="UCP016183"/>
    <property type="match status" value="1"/>
</dbReference>
<dbReference type="SUPFAM" id="SSF158710">
    <property type="entry name" value="PSPTO4464-like"/>
    <property type="match status" value="1"/>
</dbReference>